<dbReference type="EMBL" id="U09549">
    <property type="protein sequence ID" value="AAA92803.1"/>
    <property type="molecule type" value="Genomic_DNA"/>
</dbReference>
<dbReference type="EMBL" id="AE000511">
    <property type="protein sequence ID" value="AAD07911.1"/>
    <property type="molecule type" value="Genomic_DNA"/>
</dbReference>
<dbReference type="PIR" id="F64628">
    <property type="entry name" value="F64628"/>
</dbReference>
<dbReference type="RefSeq" id="NP_207664.1">
    <property type="nucleotide sequence ID" value="NC_000915.1"/>
</dbReference>
<dbReference type="RefSeq" id="WP_000946389.1">
    <property type="nucleotide sequence ID" value="NC_018939.1"/>
</dbReference>
<dbReference type="SMR" id="P50610"/>
<dbReference type="DIP" id="DIP-3456N"/>
<dbReference type="IntAct" id="P50610">
    <property type="interactions" value="6"/>
</dbReference>
<dbReference type="MINT" id="P50610"/>
<dbReference type="STRING" id="85962.HP_0870"/>
<dbReference type="PaxDb" id="85962-C694_04455"/>
<dbReference type="EnsemblBacteria" id="AAD07911">
    <property type="protein sequence ID" value="AAD07911"/>
    <property type="gene ID" value="HP_0870"/>
</dbReference>
<dbReference type="KEGG" id="heo:C694_04455"/>
<dbReference type="KEGG" id="hpy:HP_0870"/>
<dbReference type="PATRIC" id="fig|85962.47.peg.924"/>
<dbReference type="eggNOG" id="COG1749">
    <property type="taxonomic scope" value="Bacteria"/>
</dbReference>
<dbReference type="InParanoid" id="P50610"/>
<dbReference type="OrthoDB" id="9804559at2"/>
<dbReference type="PhylomeDB" id="P50610"/>
<dbReference type="Proteomes" id="UP000000429">
    <property type="component" value="Chromosome"/>
</dbReference>
<dbReference type="GO" id="GO:0009288">
    <property type="term" value="C:bacterial-type flagellum"/>
    <property type="evidence" value="ECO:0000318"/>
    <property type="project" value="GO_Central"/>
</dbReference>
<dbReference type="GO" id="GO:0009425">
    <property type="term" value="C:bacterial-type flagellum basal body"/>
    <property type="evidence" value="ECO:0007669"/>
    <property type="project" value="UniProtKB-SubCell"/>
</dbReference>
<dbReference type="GO" id="GO:0044781">
    <property type="term" value="P:bacterial-type flagellum organization"/>
    <property type="evidence" value="ECO:0007669"/>
    <property type="project" value="InterPro"/>
</dbReference>
<dbReference type="GO" id="GO:0071978">
    <property type="term" value="P:bacterial-type flagellum-dependent swarming motility"/>
    <property type="evidence" value="ECO:0000318"/>
    <property type="project" value="GO_Central"/>
</dbReference>
<dbReference type="FunFam" id="2.60.98.20:FF:000003">
    <property type="entry name" value="Flagellar hook protein FlgE"/>
    <property type="match status" value="1"/>
</dbReference>
<dbReference type="Gene3D" id="3.30.70.2120">
    <property type="match status" value="1"/>
</dbReference>
<dbReference type="Gene3D" id="2.60.98.20">
    <property type="entry name" value="Flagellar hook protein FlgE"/>
    <property type="match status" value="1"/>
</dbReference>
<dbReference type="InterPro" id="IPR037058">
    <property type="entry name" value="Falgellar_hook_FlgE_sf"/>
</dbReference>
<dbReference type="InterPro" id="IPR001444">
    <property type="entry name" value="Flag_bb_rod_N"/>
</dbReference>
<dbReference type="InterPro" id="IPR020013">
    <property type="entry name" value="Flagellar_FlgE/F/G"/>
</dbReference>
<dbReference type="InterPro" id="IPR010810">
    <property type="entry name" value="Flagellin_hook_IN_motif"/>
</dbReference>
<dbReference type="InterPro" id="IPR010930">
    <property type="entry name" value="Flg_bb/hook_C_dom"/>
</dbReference>
<dbReference type="InterPro" id="IPR037925">
    <property type="entry name" value="FlgE/F/G-like"/>
</dbReference>
<dbReference type="InterPro" id="IPR011491">
    <property type="entry name" value="FlgE_D2"/>
</dbReference>
<dbReference type="InterPro" id="IPR012835">
    <property type="entry name" value="FlgE_epsilon"/>
</dbReference>
<dbReference type="InterPro" id="IPR053967">
    <property type="entry name" value="LlgE_F_G-like_D1"/>
</dbReference>
<dbReference type="NCBIfam" id="TIGR02489">
    <property type="entry name" value="flgE_epsilon"/>
    <property type="match status" value="1"/>
</dbReference>
<dbReference type="NCBIfam" id="TIGR03506">
    <property type="entry name" value="FlgEFG_subfam"/>
    <property type="match status" value="2"/>
</dbReference>
<dbReference type="PANTHER" id="PTHR30435:SF19">
    <property type="entry name" value="FLAGELLAR BASAL-BODY ROD PROTEIN FLGG"/>
    <property type="match status" value="1"/>
</dbReference>
<dbReference type="PANTHER" id="PTHR30435">
    <property type="entry name" value="FLAGELLAR PROTEIN"/>
    <property type="match status" value="1"/>
</dbReference>
<dbReference type="Pfam" id="PF07196">
    <property type="entry name" value="Flagellin_IN"/>
    <property type="match status" value="1"/>
</dbReference>
<dbReference type="Pfam" id="PF00460">
    <property type="entry name" value="Flg_bb_rod"/>
    <property type="match status" value="1"/>
</dbReference>
<dbReference type="Pfam" id="PF06429">
    <property type="entry name" value="Flg_bbr_C"/>
    <property type="match status" value="1"/>
</dbReference>
<dbReference type="Pfam" id="PF07559">
    <property type="entry name" value="FlgE_D2"/>
    <property type="match status" value="1"/>
</dbReference>
<dbReference type="Pfam" id="PF22692">
    <property type="entry name" value="LlgE_F_G_D1"/>
    <property type="match status" value="1"/>
</dbReference>
<dbReference type="SUPFAM" id="SSF117143">
    <property type="entry name" value="Flagellar hook protein flgE"/>
    <property type="match status" value="2"/>
</dbReference>
<organism>
    <name type="scientific">Helicobacter pylori (strain ATCC 700392 / 26695)</name>
    <name type="common">Campylobacter pylori</name>
    <dbReference type="NCBI Taxonomy" id="85962"/>
    <lineage>
        <taxon>Bacteria</taxon>
        <taxon>Pseudomonadati</taxon>
        <taxon>Campylobacterota</taxon>
        <taxon>Epsilonproteobacteria</taxon>
        <taxon>Campylobacterales</taxon>
        <taxon>Helicobacteraceae</taxon>
        <taxon>Helicobacter</taxon>
    </lineage>
</organism>
<feature type="chain" id="PRO_0000180828" description="Flagellar hook protein FlgE">
    <location>
        <begin position="1"/>
        <end position="718"/>
    </location>
</feature>
<feature type="sequence conflict" description="In Ref. 1; AAA92803." evidence="1" ref="1">
    <original>S</original>
    <variation>N</variation>
    <location>
        <position position="106"/>
    </location>
</feature>
<feature type="sequence conflict" description="In Ref. 1; AAA92803." evidence="1" ref="1">
    <original>C</original>
    <variation>Y</variation>
    <location>
        <position position="237"/>
    </location>
</feature>
<feature type="sequence conflict" description="In Ref. 1; AAA92803." evidence="1" ref="1">
    <original>A</original>
    <variation>P</variation>
    <location>
        <position position="259"/>
    </location>
</feature>
<feature type="sequence conflict" description="In Ref. 1; AAA92803." evidence="1" ref="1">
    <original>DI</original>
    <variation>NS</variation>
    <location>
        <begin position="373"/>
        <end position="374"/>
    </location>
</feature>
<feature type="sequence conflict" description="In Ref. 1; AAA92803." evidence="1" ref="1">
    <original>SV</original>
    <variation>TI</variation>
    <location>
        <begin position="413"/>
        <end position="414"/>
    </location>
</feature>
<feature type="sequence conflict" description="In Ref. 1; AAA92803." evidence="1" ref="1">
    <original>E</original>
    <variation>D</variation>
    <location>
        <position position="509"/>
    </location>
</feature>
<gene>
    <name type="primary">flgE</name>
    <name type="ordered locus">HP_0870</name>
</gene>
<reference key="1">
    <citation type="journal article" date="1994" name="Mol. Microbiol.">
        <title>Non-motile mutants of Helicobacter pylori and Helicobacter mustelae defective in flagellar hook production.</title>
        <authorList>
            <person name="O'Toole P.W."/>
            <person name="Kostrzynska M."/>
            <person name="Trust T.J."/>
        </authorList>
    </citation>
    <scope>NUCLEOTIDE SEQUENCE [GENOMIC DNA]</scope>
    <scope>PROTEIN SEQUENCE OF 1-25</scope>
    <scope>CHARACTERIZATION</scope>
    <source>
        <strain>CCUG 951</strain>
        <strain>DSM 4867 / CCUG 17874 / NCTC 11638</strain>
    </source>
</reference>
<reference key="2">
    <citation type="journal article" date="1997" name="Nature">
        <title>The complete genome sequence of the gastric pathogen Helicobacter pylori.</title>
        <authorList>
            <person name="Tomb J.-F."/>
            <person name="White O."/>
            <person name="Kerlavage A.R."/>
            <person name="Clayton R.A."/>
            <person name="Sutton G.G."/>
            <person name="Fleischmann R.D."/>
            <person name="Ketchum K.A."/>
            <person name="Klenk H.-P."/>
            <person name="Gill S.R."/>
            <person name="Dougherty B.A."/>
            <person name="Nelson K.E."/>
            <person name="Quackenbush J."/>
            <person name="Zhou L."/>
            <person name="Kirkness E.F."/>
            <person name="Peterson S.N."/>
            <person name="Loftus B.J."/>
            <person name="Richardson D.L."/>
            <person name="Dodson R.J."/>
            <person name="Khalak H.G."/>
            <person name="Glodek A."/>
            <person name="McKenney K."/>
            <person name="FitzGerald L.M."/>
            <person name="Lee N."/>
            <person name="Adams M.D."/>
            <person name="Hickey E.K."/>
            <person name="Berg D.E."/>
            <person name="Gocayne J.D."/>
            <person name="Utterback T.R."/>
            <person name="Peterson J.D."/>
            <person name="Kelley J.M."/>
            <person name="Cotton M.D."/>
            <person name="Weidman J.F."/>
            <person name="Fujii C."/>
            <person name="Bowman C."/>
            <person name="Watthey L."/>
            <person name="Wallin E."/>
            <person name="Hayes W.S."/>
            <person name="Borodovsky M."/>
            <person name="Karp P.D."/>
            <person name="Smith H.O."/>
            <person name="Fraser C.M."/>
            <person name="Venter J.C."/>
        </authorList>
    </citation>
    <scope>NUCLEOTIDE SEQUENCE [LARGE SCALE GENOMIC DNA]</scope>
    <source>
        <strain>ATCC 700392 / 26695</strain>
    </source>
</reference>
<evidence type="ECO:0000305" key="1"/>
<sequence length="718" mass="76207">MLRSLWSGVNGMQAHQIALDIESNNIANVNTTGFKYSRASFVDMLSQVKLIATAPYKNGLAGQNDFSVGLGVGVDATTKIFSQGNIQNTDVKTDLAIQGDGFFIISPDRGITRNFTRDGEFLFDSQGSLVTTGGLVVQGWVRNGSDTGNKGSDTDALKVDNTGPLENIRIDPGMVMPARASNRISMRANLNAGRHADQTAAIFALDSSAKTPSDGINPVYDSGTNLAQVAEDMGSLCNEDGDALLLNENQGIWVSYKSAKMVKDILPSAENSTLELNGVKISFTNDSAVSRTSSLVAAKNAINAVKSQTGIEAYLDGKQLRLENTNELDGDEKLKNIVVTQAGTGAFANFLDGDKDVTAFKYSYTHSISPNADIGQFRTTEDLRALIQHDANIVKDPSLADNYQDSAASIGVSVNQYGMFEINNKDNKNVIKENLNIFVSGYSSDSVTNNVLFKNAMKGLNTASLIEGGASASSSKFTHATHATSIDVIDSLGTKHAMRIEFYRSGGAEWNFRVIVPEPGELVGGSAARPNVFEGGRLHFNNDGSLAGMNPPLLQFDPKNGADAPQRINLAFGSSGSFDGLTSVDKISETYAIEQNGYQAGDLMDVRFDSDGVLLGAFSNGRTLALAQVALANFANDAGLQALGGNVFSQTGNSGQALIGAANTGRRGSISGSKLESSNVDLSRSLTNLIVVQRGFQANSKAVTTSDQILNTLLNLKQ</sequence>
<name>FLGE_HELPY</name>
<proteinExistence type="evidence at protein level"/>
<keyword id="KW-0975">Bacterial flagellum</keyword>
<keyword id="KW-0903">Direct protein sequencing</keyword>
<keyword id="KW-1185">Reference proteome</keyword>
<protein>
    <recommendedName>
        <fullName>Flagellar hook protein FlgE</fullName>
    </recommendedName>
</protein>
<accession>P50610</accession>
<comment type="function">
    <text>A flexible structure which links the flagellar filament to the drive apparatus in the basal body. Absence of the gene leads to absence of the hook protein, lack of the flagellar filament and thus loss of mobility. Approximately wild-type levels of the flagellar subunits are still produced and accumulate mostly in the cytosol.</text>
</comment>
<comment type="subcellular location">
    <subcellularLocation>
        <location>Bacterial flagellum basal body</location>
    </subcellularLocation>
</comment>
<comment type="miscellaneous">
    <text>The N-terminal amino acid sequence was from strain CCUG 951; the DNA sequence was from strain CCUG 17874. Disruption and subcellular localization experiments were performed for both strains. The apparent pI for the hook protein was 5.1.</text>
</comment>
<comment type="similarity">
    <text evidence="1">Belongs to the flagella basal body rod proteins family.</text>
</comment>